<protein>
    <recommendedName>
        <fullName>Nuclease SbcCD subunit C</fullName>
    </recommendedName>
</protein>
<accession>Q2YXX0</accession>
<name>SBCC_STAAB</name>
<organism>
    <name type="scientific">Staphylococcus aureus (strain bovine RF122 / ET3-1)</name>
    <dbReference type="NCBI Taxonomy" id="273036"/>
    <lineage>
        <taxon>Bacteria</taxon>
        <taxon>Bacillati</taxon>
        <taxon>Bacillota</taxon>
        <taxon>Bacilli</taxon>
        <taxon>Bacillales</taxon>
        <taxon>Staphylococcaceae</taxon>
        <taxon>Staphylococcus</taxon>
    </lineage>
</organism>
<sequence>MKPLHLKLNNFGPFLKEEIDFSKIDNNELFLISGKTGSGKTMIFDAMTYALFGKASTEQREENDLRSHFADGKQPMSVTFEFQLNHRIYKVHRQGPYIKEGNTTKTNAKFDVFEMVDGKYEIRESKVISGTQFIIELLGVNADQFRQLFILPQGEFKRFLISNSREKQGILRTLFDSEKFEAIREILKEEVKKEKAQIENRYQQIDLLWQEIESFDDDKIKGLLEVATQQIDKVIENIPLLQVRSKEILAFVNESKETAIKEYEIIEKKTLENNILKDNINQLNKNKIDFVQLKEQQPEIEEIEAKLKLLQDITNLLNYIENREKIETKIANCKKDISKTNNKILNLECDKRTIDKEKKMLEENGDLIESKISFIDKTRVLFNDINKYQQSYLNIERLRTEGEQLGDELNNLIKGLEKVEDSIGNNESDYEKIIELNNAITNINNEINVIKENEKAKAELDKLLGSKQELENQINEEKTILKNLEIKLDRYDKSKLDLNDKESFISEIKSAVKIGDQCPICGNEIQDLGHHIDFDSIAKRQNEIKEIEANIHTMKSNIAVHNFEIKFVNEKISNINIKTQSDLSLEVLNKRLLENENALNNQRDLNKFIEQMKEEKDNLTLQIHNKQLRLNKNESELKICRDLITEFETLSKYNNITNFEVDYKKYVQDVNQHQEHSKEIEDKLIQLSQRKLIEQNNLNHYENQLETYNNDLELNEQSIEMEMSRLNLTDDNDINEIIAWRGEQEELEQKRDTYKKRYHEFEMEIARLESLTKDKELLDSDKLIDEYELKKGKMNTLIDEYSAVHYQCQNNIKKTQSIVSHINYLNQELKDQQEIFQLAEIVSGKNNKNLTLENFVLIYYLDQIIAQANLRLATMSDNRYQLIRREAVSHGLSGLEIDVFDLHSNKSRHISSLSGGETFQSSLALALGLSEIVQQQSGGISLESIFIDEGFGTLDQETLETALDTLLNLKSTGRMVGIISHVSELKNRIPLVLEVKSDQYQSSTRFKRN</sequence>
<evidence type="ECO:0000250" key="1"/>
<evidence type="ECO:0000255" key="2"/>
<evidence type="ECO:0000305" key="3"/>
<gene>
    <name type="primary">sbcC</name>
    <name type="ordered locus">SAB1204</name>
</gene>
<feature type="chain" id="PRO_0000338460" description="Nuclease SbcCD subunit C">
    <location>
        <begin position="1"/>
        <end position="1009"/>
    </location>
</feature>
<feature type="coiled-coil region" evidence="2">
    <location>
        <begin position="176"/>
        <end position="208"/>
    </location>
</feature>
<feature type="coiled-coil region" evidence="2">
    <location>
        <begin position="264"/>
        <end position="364"/>
    </location>
</feature>
<feature type="coiled-coil region" evidence="2">
    <location>
        <begin position="392"/>
        <end position="501"/>
    </location>
</feature>
<feature type="coiled-coil region" evidence="2">
    <location>
        <begin position="535"/>
        <end position="776"/>
    </location>
</feature>
<feature type="binding site" evidence="2">
    <location>
        <begin position="34"/>
        <end position="41"/>
    </location>
    <ligand>
        <name>ATP</name>
        <dbReference type="ChEBI" id="CHEBI:30616"/>
    </ligand>
</feature>
<reference key="1">
    <citation type="journal article" date="2007" name="PLoS ONE">
        <title>Molecular correlates of host specialization in Staphylococcus aureus.</title>
        <authorList>
            <person name="Herron-Olson L."/>
            <person name="Fitzgerald J.R."/>
            <person name="Musser J.M."/>
            <person name="Kapur V."/>
        </authorList>
    </citation>
    <scope>NUCLEOTIDE SEQUENCE [LARGE SCALE GENOMIC DNA]</scope>
    <source>
        <strain>bovine RF122 / ET3-1</strain>
    </source>
</reference>
<comment type="function">
    <text evidence="1">SbcCD cleaves DNA hairpin structures. These structures can inhibit DNA replication and are intermediates in certain DNA recombination reactions. The complex acts as a 3'-&gt;5' double strand exonuclease that can open hairpins. It also has a 5' single-strand endonuclease activity (By similarity).</text>
</comment>
<comment type="subunit">
    <text evidence="1">Heterodimer of SbcC and SbcD.</text>
</comment>
<comment type="similarity">
    <text evidence="3">Belongs to the SMC family. SbcC subfamily.</text>
</comment>
<comment type="sequence caution" evidence="3">
    <conflict type="frameshift">
        <sequence resource="EMBL-CDS" id="CAI80893"/>
    </conflict>
</comment>
<proteinExistence type="inferred from homology"/>
<keyword id="KW-0067">ATP-binding</keyword>
<keyword id="KW-0175">Coiled coil</keyword>
<keyword id="KW-0233">DNA recombination</keyword>
<keyword id="KW-0235">DNA replication</keyword>
<keyword id="KW-0255">Endonuclease</keyword>
<keyword id="KW-0269">Exonuclease</keyword>
<keyword id="KW-0378">Hydrolase</keyword>
<keyword id="KW-0540">Nuclease</keyword>
<keyword id="KW-0547">Nucleotide-binding</keyword>
<dbReference type="EMBL" id="AJ938182">
    <property type="protein sequence ID" value="CAI80893.1"/>
    <property type="status" value="ALT_FRAME"/>
    <property type="molecule type" value="Genomic_DNA"/>
</dbReference>
<dbReference type="KEGG" id="sab:SAB1204"/>
<dbReference type="HOGENOM" id="CLU_004785_2_1_9"/>
<dbReference type="GO" id="GO:0005524">
    <property type="term" value="F:ATP binding"/>
    <property type="evidence" value="ECO:0007669"/>
    <property type="project" value="UniProtKB-KW"/>
</dbReference>
<dbReference type="GO" id="GO:0016887">
    <property type="term" value="F:ATP hydrolysis activity"/>
    <property type="evidence" value="ECO:0007669"/>
    <property type="project" value="InterPro"/>
</dbReference>
<dbReference type="GO" id="GO:0004519">
    <property type="term" value="F:endonuclease activity"/>
    <property type="evidence" value="ECO:0007669"/>
    <property type="project" value="UniProtKB-KW"/>
</dbReference>
<dbReference type="GO" id="GO:0004527">
    <property type="term" value="F:exonuclease activity"/>
    <property type="evidence" value="ECO:0007669"/>
    <property type="project" value="UniProtKB-KW"/>
</dbReference>
<dbReference type="GO" id="GO:0006310">
    <property type="term" value="P:DNA recombination"/>
    <property type="evidence" value="ECO:0007669"/>
    <property type="project" value="UniProtKB-KW"/>
</dbReference>
<dbReference type="GO" id="GO:0006260">
    <property type="term" value="P:DNA replication"/>
    <property type="evidence" value="ECO:0007669"/>
    <property type="project" value="UniProtKB-KW"/>
</dbReference>
<dbReference type="GO" id="GO:0006302">
    <property type="term" value="P:double-strand break repair"/>
    <property type="evidence" value="ECO:0007669"/>
    <property type="project" value="InterPro"/>
</dbReference>
<dbReference type="CDD" id="cd03279">
    <property type="entry name" value="ABC_sbcCD"/>
    <property type="match status" value="1"/>
</dbReference>
<dbReference type="Gene3D" id="3.40.50.300">
    <property type="entry name" value="P-loop containing nucleotide triphosphate hydrolases"/>
    <property type="match status" value="2"/>
</dbReference>
<dbReference type="InterPro" id="IPR027417">
    <property type="entry name" value="P-loop_NTPase"/>
</dbReference>
<dbReference type="InterPro" id="IPR038729">
    <property type="entry name" value="Rad50/SbcC_AAA"/>
</dbReference>
<dbReference type="InterPro" id="IPR053380">
    <property type="entry name" value="SbcCD_Nuclease_C"/>
</dbReference>
<dbReference type="NCBIfam" id="NF041751">
    <property type="entry name" value="sbcc_Staph"/>
    <property type="match status" value="1"/>
</dbReference>
<dbReference type="PANTHER" id="PTHR32114">
    <property type="entry name" value="ABC TRANSPORTER ABCH.3"/>
    <property type="match status" value="1"/>
</dbReference>
<dbReference type="PANTHER" id="PTHR32114:SF2">
    <property type="entry name" value="ABC TRANSPORTER ABCH.3"/>
    <property type="match status" value="1"/>
</dbReference>
<dbReference type="Pfam" id="PF13476">
    <property type="entry name" value="AAA_23"/>
    <property type="match status" value="1"/>
</dbReference>
<dbReference type="Pfam" id="PF13558">
    <property type="entry name" value="SbcC_Walker_B"/>
    <property type="match status" value="1"/>
</dbReference>
<dbReference type="SUPFAM" id="SSF52540">
    <property type="entry name" value="P-loop containing nucleoside triphosphate hydrolases"/>
    <property type="match status" value="1"/>
</dbReference>